<reference key="1">
    <citation type="journal article" date="2009" name="BMC Genomics">
        <title>Metabolic analysis of the soil microbe Dechloromonas aromatica str. RCB: indications of a surprisingly complex life-style and cryptic anaerobic pathways for aromatic degradation.</title>
        <authorList>
            <person name="Salinero K.K."/>
            <person name="Keller K."/>
            <person name="Feil W.S."/>
            <person name="Feil H."/>
            <person name="Trong S."/>
            <person name="Di Bartolo G."/>
            <person name="Lapidus A."/>
        </authorList>
    </citation>
    <scope>NUCLEOTIDE SEQUENCE [LARGE SCALE GENOMIC DNA]</scope>
    <source>
        <strain>RCB</strain>
    </source>
</reference>
<gene>
    <name type="ordered locus">Daro_0453</name>
</gene>
<comment type="catalytic activity">
    <reaction evidence="1">
        <text>(4aS,6R)-4a-hydroxy-L-erythro-5,6,7,8-tetrahydrobiopterin = (6R)-L-erythro-6,7-dihydrobiopterin + H2O</text>
        <dbReference type="Rhea" id="RHEA:11920"/>
        <dbReference type="ChEBI" id="CHEBI:15377"/>
        <dbReference type="ChEBI" id="CHEBI:15642"/>
        <dbReference type="ChEBI" id="CHEBI:43120"/>
        <dbReference type="EC" id="4.2.1.96"/>
    </reaction>
</comment>
<comment type="similarity">
    <text evidence="1">Belongs to the pterin-4-alpha-carbinolamine dehydratase family.</text>
</comment>
<protein>
    <recommendedName>
        <fullName evidence="1">Putative pterin-4-alpha-carbinolamine dehydratase</fullName>
        <shortName evidence="1">PHS</shortName>
        <ecNumber evidence="1">4.2.1.96</ecNumber>
    </recommendedName>
    <alternativeName>
        <fullName evidence="1">4-alpha-hydroxy-tetrahydropterin dehydratase</fullName>
    </alternativeName>
    <alternativeName>
        <fullName evidence="1">Pterin carbinolamine dehydratase</fullName>
        <shortName evidence="1">PCD</shortName>
    </alternativeName>
</protein>
<evidence type="ECO:0000255" key="1">
    <source>
        <dbReference type="HAMAP-Rule" id="MF_00434"/>
    </source>
</evidence>
<feature type="chain" id="PRO_0000231448" description="Putative pterin-4-alpha-carbinolamine dehydratase">
    <location>
        <begin position="1"/>
        <end position="112"/>
    </location>
</feature>
<organism>
    <name type="scientific">Dechloromonas aromatica (strain RCB)</name>
    <dbReference type="NCBI Taxonomy" id="159087"/>
    <lineage>
        <taxon>Bacteria</taxon>
        <taxon>Pseudomonadati</taxon>
        <taxon>Pseudomonadota</taxon>
        <taxon>Betaproteobacteria</taxon>
        <taxon>Rhodocyclales</taxon>
        <taxon>Azonexaceae</taxon>
        <taxon>Dechloromonas</taxon>
    </lineage>
</organism>
<accession>Q47IX1</accession>
<proteinExistence type="inferred from homology"/>
<dbReference type="EC" id="4.2.1.96" evidence="1"/>
<dbReference type="EMBL" id="CP000089">
    <property type="protein sequence ID" value="AAZ45210.1"/>
    <property type="molecule type" value="Genomic_DNA"/>
</dbReference>
<dbReference type="SMR" id="Q47IX1"/>
<dbReference type="STRING" id="159087.Daro_0453"/>
<dbReference type="KEGG" id="dar:Daro_0453"/>
<dbReference type="eggNOG" id="COG2154">
    <property type="taxonomic scope" value="Bacteria"/>
</dbReference>
<dbReference type="HOGENOM" id="CLU_081974_2_1_4"/>
<dbReference type="OrthoDB" id="9794987at2"/>
<dbReference type="GO" id="GO:0008124">
    <property type="term" value="F:4-alpha-hydroxytetrahydrobiopterin dehydratase activity"/>
    <property type="evidence" value="ECO:0007669"/>
    <property type="project" value="UniProtKB-UniRule"/>
</dbReference>
<dbReference type="GO" id="GO:0006729">
    <property type="term" value="P:tetrahydrobiopterin biosynthetic process"/>
    <property type="evidence" value="ECO:0007669"/>
    <property type="project" value="InterPro"/>
</dbReference>
<dbReference type="CDD" id="cd00913">
    <property type="entry name" value="PCD_DCoH_subfamily_a"/>
    <property type="match status" value="1"/>
</dbReference>
<dbReference type="Gene3D" id="3.30.1360.20">
    <property type="entry name" value="Transcriptional coactivator/pterin dehydratase"/>
    <property type="match status" value="1"/>
</dbReference>
<dbReference type="HAMAP" id="MF_00434">
    <property type="entry name" value="Pterin_4_alpha"/>
    <property type="match status" value="1"/>
</dbReference>
<dbReference type="InterPro" id="IPR036428">
    <property type="entry name" value="PCD_sf"/>
</dbReference>
<dbReference type="InterPro" id="IPR001533">
    <property type="entry name" value="Pterin_deHydtase"/>
</dbReference>
<dbReference type="NCBIfam" id="NF002019">
    <property type="entry name" value="PRK00823.1-4"/>
    <property type="match status" value="1"/>
</dbReference>
<dbReference type="PANTHER" id="PTHR12599">
    <property type="entry name" value="PTERIN-4-ALPHA-CARBINOLAMINE DEHYDRATASE"/>
    <property type="match status" value="1"/>
</dbReference>
<dbReference type="PANTHER" id="PTHR12599:SF0">
    <property type="entry name" value="PTERIN-4-ALPHA-CARBINOLAMINE DEHYDRATASE"/>
    <property type="match status" value="1"/>
</dbReference>
<dbReference type="Pfam" id="PF01329">
    <property type="entry name" value="Pterin_4a"/>
    <property type="match status" value="1"/>
</dbReference>
<dbReference type="SUPFAM" id="SSF55248">
    <property type="entry name" value="PCD-like"/>
    <property type="match status" value="1"/>
</dbReference>
<keyword id="KW-0456">Lyase</keyword>
<name>PHS_DECAR</name>
<sequence length="112" mass="12589">MATSCNLADRQCTPCEGGIAPLENSVAAVMLDTLPGWTLDGQRLDKTYVFRNHYEAMAFVNAIAWVSHRENHHPELIVGYKDVRVRYWTHAIGGLSENDFICAAKLEKLLEI</sequence>